<feature type="chain" id="PRO_0000048348" description="Tubulin beta-5 chain">
    <location>
        <begin position="1"/>
        <end position="445"/>
    </location>
</feature>
<feature type="region of interest" description="Disordered" evidence="3">
    <location>
        <begin position="420"/>
        <end position="445"/>
    </location>
</feature>
<feature type="compositionally biased region" description="Acidic residues" evidence="3">
    <location>
        <begin position="429"/>
        <end position="445"/>
    </location>
</feature>
<feature type="binding site" evidence="2">
    <location>
        <position position="11"/>
    </location>
    <ligand>
        <name>GTP</name>
        <dbReference type="ChEBI" id="CHEBI:37565"/>
    </ligand>
</feature>
<feature type="binding site" evidence="1">
    <location>
        <position position="69"/>
    </location>
    <ligand>
        <name>GTP</name>
        <dbReference type="ChEBI" id="CHEBI:37565"/>
    </ligand>
</feature>
<feature type="binding site" evidence="1">
    <location>
        <position position="69"/>
    </location>
    <ligand>
        <name>Mg(2+)</name>
        <dbReference type="ChEBI" id="CHEBI:18420"/>
    </ligand>
</feature>
<feature type="binding site" evidence="2">
    <location>
        <position position="138"/>
    </location>
    <ligand>
        <name>GTP</name>
        <dbReference type="ChEBI" id="CHEBI:37565"/>
    </ligand>
</feature>
<feature type="binding site" evidence="2">
    <location>
        <position position="142"/>
    </location>
    <ligand>
        <name>GTP</name>
        <dbReference type="ChEBI" id="CHEBI:37565"/>
    </ligand>
</feature>
<feature type="binding site" evidence="2">
    <location>
        <position position="143"/>
    </location>
    <ligand>
        <name>GTP</name>
        <dbReference type="ChEBI" id="CHEBI:37565"/>
    </ligand>
</feature>
<feature type="binding site" evidence="2">
    <location>
        <position position="144"/>
    </location>
    <ligand>
        <name>GTP</name>
        <dbReference type="ChEBI" id="CHEBI:37565"/>
    </ligand>
</feature>
<feature type="binding site" evidence="2">
    <location>
        <position position="204"/>
    </location>
    <ligand>
        <name>GTP</name>
        <dbReference type="ChEBI" id="CHEBI:37565"/>
    </ligand>
</feature>
<feature type="binding site" evidence="2">
    <location>
        <position position="226"/>
    </location>
    <ligand>
        <name>GTP</name>
        <dbReference type="ChEBI" id="CHEBI:37565"/>
    </ligand>
</feature>
<organism>
    <name type="scientific">Gossypium hirsutum</name>
    <name type="common">Upland cotton</name>
    <name type="synonym">Gossypium mexicanum</name>
    <dbReference type="NCBI Taxonomy" id="3635"/>
    <lineage>
        <taxon>Eukaryota</taxon>
        <taxon>Viridiplantae</taxon>
        <taxon>Streptophyta</taxon>
        <taxon>Embryophyta</taxon>
        <taxon>Tracheophyta</taxon>
        <taxon>Spermatophyta</taxon>
        <taxon>Magnoliopsida</taxon>
        <taxon>eudicotyledons</taxon>
        <taxon>Gunneridae</taxon>
        <taxon>Pentapetalae</taxon>
        <taxon>rosids</taxon>
        <taxon>malvids</taxon>
        <taxon>Malvales</taxon>
        <taxon>Malvaceae</taxon>
        <taxon>Malvoideae</taxon>
        <taxon>Gossypium</taxon>
    </lineage>
</organism>
<proteinExistence type="evidence at transcript level"/>
<dbReference type="EMBL" id="AY345607">
    <property type="protein sequence ID" value="AAQ92665.1"/>
    <property type="molecule type" value="mRNA"/>
</dbReference>
<dbReference type="RefSeq" id="NP_001313813.1">
    <property type="nucleotide sequence ID" value="NM_001326884.1"/>
</dbReference>
<dbReference type="SMR" id="Q6VAF7"/>
<dbReference type="STRING" id="3635.Q6VAF7"/>
<dbReference type="PaxDb" id="3635-Q6VAF7"/>
<dbReference type="KEGG" id="ghi:107899987"/>
<dbReference type="Proteomes" id="UP000189702">
    <property type="component" value="Unplaced"/>
</dbReference>
<dbReference type="GO" id="GO:0005737">
    <property type="term" value="C:cytoplasm"/>
    <property type="evidence" value="ECO:0000318"/>
    <property type="project" value="GO_Central"/>
</dbReference>
<dbReference type="GO" id="GO:0005874">
    <property type="term" value="C:microtubule"/>
    <property type="evidence" value="ECO:0000318"/>
    <property type="project" value="GO_Central"/>
</dbReference>
<dbReference type="GO" id="GO:0005525">
    <property type="term" value="F:GTP binding"/>
    <property type="evidence" value="ECO:0000318"/>
    <property type="project" value="GO_Central"/>
</dbReference>
<dbReference type="GO" id="GO:0003924">
    <property type="term" value="F:GTPase activity"/>
    <property type="evidence" value="ECO:0007669"/>
    <property type="project" value="InterPro"/>
</dbReference>
<dbReference type="GO" id="GO:0046872">
    <property type="term" value="F:metal ion binding"/>
    <property type="evidence" value="ECO:0007669"/>
    <property type="project" value="UniProtKB-KW"/>
</dbReference>
<dbReference type="GO" id="GO:0005200">
    <property type="term" value="F:structural constituent of cytoskeleton"/>
    <property type="evidence" value="ECO:0000318"/>
    <property type="project" value="GO_Central"/>
</dbReference>
<dbReference type="GO" id="GO:0016049">
    <property type="term" value="P:cell growth"/>
    <property type="evidence" value="ECO:0000315"/>
    <property type="project" value="AgBase"/>
</dbReference>
<dbReference type="GO" id="GO:0000226">
    <property type="term" value="P:microtubule cytoskeleton organization"/>
    <property type="evidence" value="ECO:0000318"/>
    <property type="project" value="GO_Central"/>
</dbReference>
<dbReference type="GO" id="GO:0000278">
    <property type="term" value="P:mitotic cell cycle"/>
    <property type="evidence" value="ECO:0000318"/>
    <property type="project" value="GO_Central"/>
</dbReference>
<dbReference type="GO" id="GO:0009723">
    <property type="term" value="P:response to ethylene"/>
    <property type="evidence" value="ECO:0000270"/>
    <property type="project" value="AgBase"/>
</dbReference>
<dbReference type="GO" id="GO:0090378">
    <property type="term" value="P:seed trichome elongation"/>
    <property type="evidence" value="ECO:0000315"/>
    <property type="project" value="AgBase"/>
</dbReference>
<dbReference type="CDD" id="cd02187">
    <property type="entry name" value="beta_tubulin"/>
    <property type="match status" value="1"/>
</dbReference>
<dbReference type="FunFam" id="1.10.287.600:FF:000002">
    <property type="entry name" value="Tubulin beta chain"/>
    <property type="match status" value="1"/>
</dbReference>
<dbReference type="FunFam" id="3.30.1330.20:FF:000002">
    <property type="entry name" value="Tubulin beta chain"/>
    <property type="match status" value="1"/>
</dbReference>
<dbReference type="FunFam" id="3.40.50.1440:FF:000005">
    <property type="entry name" value="Tubulin beta chain"/>
    <property type="match status" value="1"/>
</dbReference>
<dbReference type="Gene3D" id="1.10.287.600">
    <property type="entry name" value="Helix hairpin bin"/>
    <property type="match status" value="1"/>
</dbReference>
<dbReference type="Gene3D" id="3.30.1330.20">
    <property type="entry name" value="Tubulin/FtsZ, C-terminal domain"/>
    <property type="match status" value="1"/>
</dbReference>
<dbReference type="Gene3D" id="3.40.50.1440">
    <property type="entry name" value="Tubulin/FtsZ, GTPase domain"/>
    <property type="match status" value="1"/>
</dbReference>
<dbReference type="InterPro" id="IPR013838">
    <property type="entry name" value="Beta-tubulin_BS"/>
</dbReference>
<dbReference type="InterPro" id="IPR002453">
    <property type="entry name" value="Beta_tubulin"/>
</dbReference>
<dbReference type="InterPro" id="IPR008280">
    <property type="entry name" value="Tub_FtsZ_C"/>
</dbReference>
<dbReference type="InterPro" id="IPR000217">
    <property type="entry name" value="Tubulin"/>
</dbReference>
<dbReference type="InterPro" id="IPR037103">
    <property type="entry name" value="Tubulin/FtsZ-like_C"/>
</dbReference>
<dbReference type="InterPro" id="IPR018316">
    <property type="entry name" value="Tubulin/FtsZ_2-layer-sand-dom"/>
</dbReference>
<dbReference type="InterPro" id="IPR036525">
    <property type="entry name" value="Tubulin/FtsZ_GTPase_sf"/>
</dbReference>
<dbReference type="InterPro" id="IPR023123">
    <property type="entry name" value="Tubulin_C"/>
</dbReference>
<dbReference type="InterPro" id="IPR017975">
    <property type="entry name" value="Tubulin_CS"/>
</dbReference>
<dbReference type="InterPro" id="IPR003008">
    <property type="entry name" value="Tubulin_FtsZ_GTPase"/>
</dbReference>
<dbReference type="PANTHER" id="PTHR11588">
    <property type="entry name" value="TUBULIN"/>
    <property type="match status" value="1"/>
</dbReference>
<dbReference type="Pfam" id="PF00091">
    <property type="entry name" value="Tubulin"/>
    <property type="match status" value="1"/>
</dbReference>
<dbReference type="Pfam" id="PF03953">
    <property type="entry name" value="Tubulin_C"/>
    <property type="match status" value="1"/>
</dbReference>
<dbReference type="PRINTS" id="PR01163">
    <property type="entry name" value="BETATUBULIN"/>
</dbReference>
<dbReference type="PRINTS" id="PR01161">
    <property type="entry name" value="TUBULIN"/>
</dbReference>
<dbReference type="SMART" id="SM00864">
    <property type="entry name" value="Tubulin"/>
    <property type="match status" value="1"/>
</dbReference>
<dbReference type="SMART" id="SM00865">
    <property type="entry name" value="Tubulin_C"/>
    <property type="match status" value="1"/>
</dbReference>
<dbReference type="SUPFAM" id="SSF55307">
    <property type="entry name" value="Tubulin C-terminal domain-like"/>
    <property type="match status" value="1"/>
</dbReference>
<dbReference type="SUPFAM" id="SSF52490">
    <property type="entry name" value="Tubulin nucleotide-binding domain-like"/>
    <property type="match status" value="1"/>
</dbReference>
<dbReference type="PROSITE" id="PS00227">
    <property type="entry name" value="TUBULIN"/>
    <property type="match status" value="1"/>
</dbReference>
<dbReference type="PROSITE" id="PS00228">
    <property type="entry name" value="TUBULIN_B_AUTOREG"/>
    <property type="match status" value="1"/>
</dbReference>
<sequence>MREILHIQGGQCGNQIGAKFWEVICDEHGVDNTGKYNGDSDLQLERINVYYNEASGGRYVPRAVLMDLEPGTMDSVRSGPFGQIFRPDNFVFGQSGAGNNWAKGHYTEGAELIDSVLDVVRKEAENCDCLQGFQVCHSLGGGTGSGMGTLLISKIREEYPDRMMLTFSVFPSPKVSDTVVEPYNATLSVHQLVENADECMVLDNEALYDICFRTLKLATPTFGDLNHLISATMSGVTCCLRFPGQLNSDLRKLAVNLIPFPRLHFFMVGFAPLTSRGSQQYRALTVPELTQQMWDAKNMMCAADPRHGRYLTACAMFRGKMSTKEVDEQMINVQNKNSSYFVEWIPNNVKSSVCDIPPKGLKMASTFIGNSTSIQEMFRRVSEQFTAMFRRKAFLHWYTGEGMDEMEFTEAESDMNDLVAEYQQYQDATADDEYEEGEEEEEEAA</sequence>
<accession>Q6VAF7</accession>
<evidence type="ECO:0000250" key="1">
    <source>
        <dbReference type="UniProtKB" id="P68363"/>
    </source>
</evidence>
<evidence type="ECO:0000250" key="2">
    <source>
        <dbReference type="UniProtKB" id="Q13509"/>
    </source>
</evidence>
<evidence type="ECO:0000256" key="3">
    <source>
        <dbReference type="SAM" id="MobiDB-lite"/>
    </source>
</evidence>
<evidence type="ECO:0000305" key="4"/>
<reference key="1">
    <citation type="submission" date="2003-07" db="EMBL/GenBank/DDBJ databases">
        <title>Cloning and expression of nine tubulin genes from elongating cotton fiber cells.</title>
        <authorList>
            <person name="Feng J.-X."/>
            <person name="Wei G."/>
            <person name="Wang L."/>
            <person name="Ji S.-J."/>
            <person name="Zhang T.-Z."/>
            <person name="Zhu Y.-X."/>
        </authorList>
    </citation>
    <scope>NUCLEOTIDE SEQUENCE [MRNA]</scope>
</reference>
<protein>
    <recommendedName>
        <fullName>Tubulin beta-5 chain</fullName>
    </recommendedName>
    <alternativeName>
        <fullName>Beta-5-tubulin</fullName>
    </alternativeName>
</protein>
<name>TBB5_GOSHI</name>
<comment type="function">
    <text>Tubulin is the major constituent of microtubules, a cylinder consisting of laterally associated linear protofilaments composed of alpha- and beta-tubulin heterodimers. Microtubules grow by the addition of GTP-tubulin dimers to the microtubule end, where a stabilizing cap forms. Below the cap, tubulin dimers are in GDP-bound state, owing to GTPase activity of alpha-tubulin.</text>
</comment>
<comment type="cofactor">
    <cofactor evidence="1">
        <name>Mg(2+)</name>
        <dbReference type="ChEBI" id="CHEBI:18420"/>
    </cofactor>
</comment>
<comment type="subunit">
    <text>Dimer of alpha and beta chains. A typical microtubule is a hollow water-filled tube with an outer diameter of 25 nm and an inner diameter of 15 nM. Alpha-beta heterodimers associate head-to-tail to form protofilaments running lengthwise along the microtubule wall with the beta-tubulin subunit facing the microtubule plus end conferring a structural polarity. Microtubules usually have 13 protofilaments but different protofilament numbers can be found in some organisms and specialized cells.</text>
</comment>
<comment type="subcellular location">
    <subcellularLocation>
        <location>Cytoplasm</location>
        <location>Cytoskeleton</location>
    </subcellularLocation>
</comment>
<comment type="similarity">
    <text evidence="4">Belongs to the tubulin family.</text>
</comment>
<keyword id="KW-0963">Cytoplasm</keyword>
<keyword id="KW-0206">Cytoskeleton</keyword>
<keyword id="KW-0342">GTP-binding</keyword>
<keyword id="KW-0460">Magnesium</keyword>
<keyword id="KW-0479">Metal-binding</keyword>
<keyword id="KW-0493">Microtubule</keyword>
<keyword id="KW-0547">Nucleotide-binding</keyword>
<keyword id="KW-1185">Reference proteome</keyword>